<proteinExistence type="inferred from homology"/>
<keyword id="KW-0963">Cytoplasm</keyword>
<keyword id="KW-0324">Glycolysis</keyword>
<keyword id="KW-0456">Lyase</keyword>
<keyword id="KW-0460">Magnesium</keyword>
<keyword id="KW-0479">Metal-binding</keyword>
<keyword id="KW-0964">Secreted</keyword>
<sequence length="434" mass="47135">MPIITDVYAREVLDSRGNPTVEVEVLTESGAFGRALVPSGASTGEHEAVELRDGDKSRYSGKGVTKAVENVNEIIAPEIVEGEFSVLDQVSIDKMMIQLDGTPNKGKLGANAILGVSIAVARAAADLLGQPLYKYLGGFNGKQLPVPMMNIVNGGSHSDAPIAFQEFMILPTGAESFKEALRWGAEIFHNLKSILSERGLETAVGDEGGFAPKFEGTEDAVETIIKAIEKAGYKPGEDVFLGFDCASSEFYENGVYDYTKFEGEHGAKRSAAEQVDYLEELIGKYPIITIEDGMDENDWDGWKQLTDRIGDKVQLVGDDLFVTNTEILSRGIEQGIGNSILIKVNQIGTLTETFEAIEMAQKAGYTAVVSHRSGETEDTTISDIAVATNAGQIKTGSLSRTDRIAKYNQLLRIEDELFETAKFDGIKSFYNLDK</sequence>
<protein>
    <recommendedName>
        <fullName evidence="1">Enolase</fullName>
        <ecNumber evidence="1">4.2.1.11</ecNumber>
    </recommendedName>
    <alternativeName>
        <fullName evidence="1">2-phospho-D-glycerate hydro-lyase</fullName>
    </alternativeName>
    <alternativeName>
        <fullName evidence="1">2-phosphoglycerate dehydratase</fullName>
    </alternativeName>
</protein>
<dbReference type="EC" id="4.2.1.11" evidence="1"/>
<dbReference type="EMBL" id="AP006716">
    <property type="protein sequence ID" value="BAE05418.1"/>
    <property type="molecule type" value="Genomic_DNA"/>
</dbReference>
<dbReference type="RefSeq" id="WP_011276373.1">
    <property type="nucleotide sequence ID" value="NC_007168.1"/>
</dbReference>
<dbReference type="SMR" id="Q4L4K7"/>
<dbReference type="GeneID" id="74186259"/>
<dbReference type="KEGG" id="sha:SH2109"/>
<dbReference type="eggNOG" id="COG0148">
    <property type="taxonomic scope" value="Bacteria"/>
</dbReference>
<dbReference type="HOGENOM" id="CLU_031223_2_1_9"/>
<dbReference type="OrthoDB" id="9804716at2"/>
<dbReference type="UniPathway" id="UPA00109">
    <property type="reaction ID" value="UER00187"/>
</dbReference>
<dbReference type="Proteomes" id="UP000000543">
    <property type="component" value="Chromosome"/>
</dbReference>
<dbReference type="GO" id="GO:0009986">
    <property type="term" value="C:cell surface"/>
    <property type="evidence" value="ECO:0007669"/>
    <property type="project" value="UniProtKB-SubCell"/>
</dbReference>
<dbReference type="GO" id="GO:0005576">
    <property type="term" value="C:extracellular region"/>
    <property type="evidence" value="ECO:0007669"/>
    <property type="project" value="UniProtKB-SubCell"/>
</dbReference>
<dbReference type="GO" id="GO:0000015">
    <property type="term" value="C:phosphopyruvate hydratase complex"/>
    <property type="evidence" value="ECO:0007669"/>
    <property type="project" value="InterPro"/>
</dbReference>
<dbReference type="GO" id="GO:0000287">
    <property type="term" value="F:magnesium ion binding"/>
    <property type="evidence" value="ECO:0007669"/>
    <property type="project" value="UniProtKB-UniRule"/>
</dbReference>
<dbReference type="GO" id="GO:0004634">
    <property type="term" value="F:phosphopyruvate hydratase activity"/>
    <property type="evidence" value="ECO:0007669"/>
    <property type="project" value="UniProtKB-UniRule"/>
</dbReference>
<dbReference type="GO" id="GO:0006096">
    <property type="term" value="P:glycolytic process"/>
    <property type="evidence" value="ECO:0007669"/>
    <property type="project" value="UniProtKB-UniRule"/>
</dbReference>
<dbReference type="CDD" id="cd03313">
    <property type="entry name" value="enolase"/>
    <property type="match status" value="1"/>
</dbReference>
<dbReference type="FunFam" id="3.20.20.120:FF:000001">
    <property type="entry name" value="Enolase"/>
    <property type="match status" value="1"/>
</dbReference>
<dbReference type="FunFam" id="3.30.390.10:FF:000001">
    <property type="entry name" value="Enolase"/>
    <property type="match status" value="1"/>
</dbReference>
<dbReference type="Gene3D" id="3.20.20.120">
    <property type="entry name" value="Enolase-like C-terminal domain"/>
    <property type="match status" value="1"/>
</dbReference>
<dbReference type="Gene3D" id="3.30.390.10">
    <property type="entry name" value="Enolase-like, N-terminal domain"/>
    <property type="match status" value="1"/>
</dbReference>
<dbReference type="HAMAP" id="MF_00318">
    <property type="entry name" value="Enolase"/>
    <property type="match status" value="1"/>
</dbReference>
<dbReference type="InterPro" id="IPR000941">
    <property type="entry name" value="Enolase"/>
</dbReference>
<dbReference type="InterPro" id="IPR036849">
    <property type="entry name" value="Enolase-like_C_sf"/>
</dbReference>
<dbReference type="InterPro" id="IPR029017">
    <property type="entry name" value="Enolase-like_N"/>
</dbReference>
<dbReference type="InterPro" id="IPR020810">
    <property type="entry name" value="Enolase_C"/>
</dbReference>
<dbReference type="InterPro" id="IPR020809">
    <property type="entry name" value="Enolase_CS"/>
</dbReference>
<dbReference type="InterPro" id="IPR020811">
    <property type="entry name" value="Enolase_N"/>
</dbReference>
<dbReference type="NCBIfam" id="TIGR01060">
    <property type="entry name" value="eno"/>
    <property type="match status" value="1"/>
</dbReference>
<dbReference type="PANTHER" id="PTHR11902">
    <property type="entry name" value="ENOLASE"/>
    <property type="match status" value="1"/>
</dbReference>
<dbReference type="PANTHER" id="PTHR11902:SF1">
    <property type="entry name" value="ENOLASE"/>
    <property type="match status" value="1"/>
</dbReference>
<dbReference type="Pfam" id="PF00113">
    <property type="entry name" value="Enolase_C"/>
    <property type="match status" value="1"/>
</dbReference>
<dbReference type="Pfam" id="PF03952">
    <property type="entry name" value="Enolase_N"/>
    <property type="match status" value="1"/>
</dbReference>
<dbReference type="PIRSF" id="PIRSF001400">
    <property type="entry name" value="Enolase"/>
    <property type="match status" value="1"/>
</dbReference>
<dbReference type="PRINTS" id="PR00148">
    <property type="entry name" value="ENOLASE"/>
</dbReference>
<dbReference type="SFLD" id="SFLDF00002">
    <property type="entry name" value="enolase"/>
    <property type="match status" value="1"/>
</dbReference>
<dbReference type="SFLD" id="SFLDG00178">
    <property type="entry name" value="enolase"/>
    <property type="match status" value="1"/>
</dbReference>
<dbReference type="SMART" id="SM01192">
    <property type="entry name" value="Enolase_C"/>
    <property type="match status" value="1"/>
</dbReference>
<dbReference type="SMART" id="SM01193">
    <property type="entry name" value="Enolase_N"/>
    <property type="match status" value="1"/>
</dbReference>
<dbReference type="SUPFAM" id="SSF51604">
    <property type="entry name" value="Enolase C-terminal domain-like"/>
    <property type="match status" value="1"/>
</dbReference>
<dbReference type="SUPFAM" id="SSF54826">
    <property type="entry name" value="Enolase N-terminal domain-like"/>
    <property type="match status" value="1"/>
</dbReference>
<dbReference type="PROSITE" id="PS00164">
    <property type="entry name" value="ENOLASE"/>
    <property type="match status" value="1"/>
</dbReference>
<reference key="1">
    <citation type="journal article" date="2005" name="J. Bacteriol.">
        <title>Whole-genome sequencing of Staphylococcus haemolyticus uncovers the extreme plasticity of its genome and the evolution of human-colonizing staphylococcal species.</title>
        <authorList>
            <person name="Takeuchi F."/>
            <person name="Watanabe S."/>
            <person name="Baba T."/>
            <person name="Yuzawa H."/>
            <person name="Ito T."/>
            <person name="Morimoto Y."/>
            <person name="Kuroda M."/>
            <person name="Cui L."/>
            <person name="Takahashi M."/>
            <person name="Ankai A."/>
            <person name="Baba S."/>
            <person name="Fukui S."/>
            <person name="Lee J.C."/>
            <person name="Hiramatsu K."/>
        </authorList>
    </citation>
    <scope>NUCLEOTIDE SEQUENCE [LARGE SCALE GENOMIC DNA]</scope>
    <source>
        <strain>JCSC1435</strain>
    </source>
</reference>
<name>ENO_STAHJ</name>
<feature type="chain" id="PRO_0000267113" description="Enolase">
    <location>
        <begin position="1"/>
        <end position="434"/>
    </location>
</feature>
<feature type="active site" description="Proton donor" evidence="1">
    <location>
        <position position="207"/>
    </location>
</feature>
<feature type="active site" description="Proton acceptor" evidence="1">
    <location>
        <position position="343"/>
    </location>
</feature>
<feature type="binding site" evidence="1">
    <location>
        <position position="165"/>
    </location>
    <ligand>
        <name>(2R)-2-phosphoglycerate</name>
        <dbReference type="ChEBI" id="CHEBI:58289"/>
    </ligand>
</feature>
<feature type="binding site" evidence="1">
    <location>
        <position position="244"/>
    </location>
    <ligand>
        <name>Mg(2+)</name>
        <dbReference type="ChEBI" id="CHEBI:18420"/>
    </ligand>
</feature>
<feature type="binding site" evidence="1">
    <location>
        <position position="291"/>
    </location>
    <ligand>
        <name>Mg(2+)</name>
        <dbReference type="ChEBI" id="CHEBI:18420"/>
    </ligand>
</feature>
<feature type="binding site" evidence="1">
    <location>
        <position position="318"/>
    </location>
    <ligand>
        <name>Mg(2+)</name>
        <dbReference type="ChEBI" id="CHEBI:18420"/>
    </ligand>
</feature>
<feature type="binding site" evidence="1">
    <location>
        <position position="343"/>
    </location>
    <ligand>
        <name>(2R)-2-phosphoglycerate</name>
        <dbReference type="ChEBI" id="CHEBI:58289"/>
    </ligand>
</feature>
<feature type="binding site" evidence="1">
    <location>
        <position position="372"/>
    </location>
    <ligand>
        <name>(2R)-2-phosphoglycerate</name>
        <dbReference type="ChEBI" id="CHEBI:58289"/>
    </ligand>
</feature>
<feature type="binding site" evidence="1">
    <location>
        <position position="373"/>
    </location>
    <ligand>
        <name>(2R)-2-phosphoglycerate</name>
        <dbReference type="ChEBI" id="CHEBI:58289"/>
    </ligand>
</feature>
<feature type="binding site" evidence="1">
    <location>
        <position position="394"/>
    </location>
    <ligand>
        <name>(2R)-2-phosphoglycerate</name>
        <dbReference type="ChEBI" id="CHEBI:58289"/>
    </ligand>
</feature>
<evidence type="ECO:0000255" key="1">
    <source>
        <dbReference type="HAMAP-Rule" id="MF_00318"/>
    </source>
</evidence>
<accession>Q4L4K7</accession>
<comment type="function">
    <text evidence="1">Catalyzes the reversible conversion of 2-phosphoglycerate (2-PG) into phosphoenolpyruvate (PEP). It is essential for the degradation of carbohydrates via glycolysis.</text>
</comment>
<comment type="catalytic activity">
    <reaction evidence="1">
        <text>(2R)-2-phosphoglycerate = phosphoenolpyruvate + H2O</text>
        <dbReference type="Rhea" id="RHEA:10164"/>
        <dbReference type="ChEBI" id="CHEBI:15377"/>
        <dbReference type="ChEBI" id="CHEBI:58289"/>
        <dbReference type="ChEBI" id="CHEBI:58702"/>
        <dbReference type="EC" id="4.2.1.11"/>
    </reaction>
</comment>
<comment type="cofactor">
    <cofactor evidence="1">
        <name>Mg(2+)</name>
        <dbReference type="ChEBI" id="CHEBI:18420"/>
    </cofactor>
    <text evidence="1">Binds a second Mg(2+) ion via substrate during catalysis.</text>
</comment>
<comment type="pathway">
    <text evidence="1">Carbohydrate degradation; glycolysis; pyruvate from D-glyceraldehyde 3-phosphate: step 4/5.</text>
</comment>
<comment type="subcellular location">
    <subcellularLocation>
        <location evidence="1">Cytoplasm</location>
    </subcellularLocation>
    <subcellularLocation>
        <location evidence="1">Secreted</location>
    </subcellularLocation>
    <subcellularLocation>
        <location evidence="1">Cell surface</location>
    </subcellularLocation>
    <text evidence="1">Fractions of enolase are present in both the cytoplasm and on the cell surface.</text>
</comment>
<comment type="similarity">
    <text evidence="1">Belongs to the enolase family.</text>
</comment>
<organism>
    <name type="scientific">Staphylococcus haemolyticus (strain JCSC1435)</name>
    <dbReference type="NCBI Taxonomy" id="279808"/>
    <lineage>
        <taxon>Bacteria</taxon>
        <taxon>Bacillati</taxon>
        <taxon>Bacillota</taxon>
        <taxon>Bacilli</taxon>
        <taxon>Bacillales</taxon>
        <taxon>Staphylococcaceae</taxon>
        <taxon>Staphylococcus</taxon>
    </lineage>
</organism>
<gene>
    <name evidence="1" type="primary">eno</name>
    <name type="ordered locus">SH2109</name>
</gene>